<comment type="catalytic activity">
    <reaction evidence="3">
        <text>[hyaluronan](n) = n 3-(4-deoxy-beta-D-gluc-4-enuronosyl)-N-acetyl-D-glucosamine + H2O</text>
        <dbReference type="Rhea" id="RHEA:50240"/>
        <dbReference type="Rhea" id="RHEA-COMP:12583"/>
        <dbReference type="ChEBI" id="CHEBI:15377"/>
        <dbReference type="ChEBI" id="CHEBI:132151"/>
        <dbReference type="ChEBI" id="CHEBI:132153"/>
        <dbReference type="EC" id="4.2.2.1"/>
    </reaction>
</comment>
<comment type="subcellular location">
    <subcellularLocation>
        <location evidence="5">Secreted</location>
    </subcellularLocation>
</comment>
<comment type="similarity">
    <text evidence="5">Belongs to the polysaccharide lyase 8 family.</text>
</comment>
<comment type="sequence caution" evidence="5">
    <conflict type="erroneous initiation">
        <sequence resource="EMBL-CDS" id="CAD46929"/>
    </conflict>
    <text>Extended N-terminus.</text>
</comment>
<protein>
    <recommendedName>
        <fullName evidence="4">Hyaluronate lyase</fullName>
        <ecNumber evidence="3">4.2.2.1</ecNumber>
    </recommendedName>
    <alternativeName>
        <fullName>Hyaluronidase</fullName>
        <shortName>HYase</shortName>
    </alternativeName>
</protein>
<organism>
    <name type="scientific">Streptococcus agalactiae serotype III (strain NEM316)</name>
    <dbReference type="NCBI Taxonomy" id="211110"/>
    <lineage>
        <taxon>Bacteria</taxon>
        <taxon>Bacillati</taxon>
        <taxon>Bacillota</taxon>
        <taxon>Bacilli</taxon>
        <taxon>Lactobacillales</taxon>
        <taxon>Streptococcaceae</taxon>
        <taxon>Streptococcus</taxon>
    </lineage>
</organism>
<accession>Q53591</accession>
<keyword id="KW-0002">3D-structure</keyword>
<keyword id="KW-0456">Lyase</keyword>
<keyword id="KW-0964">Secreted</keyword>
<keyword id="KW-0732">Signal</keyword>
<name>HYSA_STRA3</name>
<evidence type="ECO:0000255" key="1"/>
<evidence type="ECO:0000256" key="2">
    <source>
        <dbReference type="SAM" id="MobiDB-lite"/>
    </source>
</evidence>
<evidence type="ECO:0000269" key="3">
    <source>
    </source>
</evidence>
<evidence type="ECO:0000303" key="4">
    <source>
    </source>
</evidence>
<evidence type="ECO:0000305" key="5"/>
<evidence type="ECO:0000305" key="6">
    <source>
    </source>
</evidence>
<evidence type="ECO:0007829" key="7">
    <source>
        <dbReference type="PDB" id="1F1S"/>
    </source>
</evidence>
<evidence type="ECO:0007829" key="8">
    <source>
        <dbReference type="PDB" id="1I8Q"/>
    </source>
</evidence>
<evidence type="ECO:0007829" key="9">
    <source>
        <dbReference type="PDB" id="1LXM"/>
    </source>
</evidence>
<feature type="signal peptide" evidence="1">
    <location>
        <begin position="1"/>
        <end position="40"/>
    </location>
</feature>
<feature type="chain" id="PRO_0000024932" description="Hyaluronate lyase">
    <location>
        <begin position="41"/>
        <end position="984"/>
    </location>
</feature>
<feature type="region of interest" description="Disordered" evidence="2">
    <location>
        <begin position="1"/>
        <end position="32"/>
    </location>
</feature>
<feature type="region of interest" description="Disordered" evidence="2">
    <location>
        <begin position="49"/>
        <end position="68"/>
    </location>
</feature>
<feature type="region of interest" description="Disordered" evidence="2">
    <location>
        <begin position="701"/>
        <end position="728"/>
    </location>
</feature>
<feature type="compositionally biased region" description="Polar residues" evidence="2">
    <location>
        <begin position="1"/>
        <end position="12"/>
    </location>
</feature>
<feature type="compositionally biased region" description="Polar residues" evidence="2">
    <location>
        <begin position="19"/>
        <end position="32"/>
    </location>
</feature>
<feature type="compositionally biased region" description="Polar residues" evidence="2">
    <location>
        <begin position="54"/>
        <end position="66"/>
    </location>
</feature>
<feature type="compositionally biased region" description="Basic and acidic residues" evidence="2">
    <location>
        <begin position="701"/>
        <end position="726"/>
    </location>
</feature>
<feature type="active site" evidence="6">
    <location>
        <position position="429"/>
    </location>
</feature>
<feature type="active site" evidence="6">
    <location>
        <position position="479"/>
    </location>
</feature>
<feature type="active site" evidence="6">
    <location>
        <position position="488"/>
    </location>
</feature>
<feature type="sequence conflict" description="In Ref. 1; AAA56749." evidence="5" ref="1">
    <original>E</original>
    <variation>G</variation>
    <location>
        <position position="45"/>
    </location>
</feature>
<feature type="sequence conflict" description="In Ref. 1; AAA56749." evidence="5" ref="1">
    <original>SA</original>
    <variation>FV</variation>
    <location>
        <begin position="155"/>
        <end position="156"/>
    </location>
</feature>
<feature type="sequence conflict" description="In Ref. 1; AAA56749." evidence="5" ref="1">
    <original>E</original>
    <variation>K</variation>
    <location>
        <position position="183"/>
    </location>
</feature>
<feature type="sequence conflict" description="In Ref. 1; AAA56749." evidence="5" ref="1">
    <original>ASTEDK</original>
    <variation>GSPEDN</variation>
    <location>
        <begin position="246"/>
        <end position="251"/>
    </location>
</feature>
<feature type="sequence conflict" description="In Ref. 1; AAA56749." evidence="5" ref="1">
    <original>H</original>
    <variation>Y</variation>
    <location>
        <position position="267"/>
    </location>
</feature>
<feature type="sequence conflict" description="In Ref. 1; AAA56749." evidence="5" ref="1">
    <original>IN</original>
    <variation>LT</variation>
    <location>
        <begin position="279"/>
        <end position="280"/>
    </location>
</feature>
<feature type="sequence conflict" description="In Ref. 1; AAA56749." evidence="5" ref="1">
    <original>A</original>
    <variation>G</variation>
    <location>
        <position position="288"/>
    </location>
</feature>
<feature type="sequence conflict" description="In Ref. 1; AAA56749." evidence="5" ref="1">
    <original>KT</original>
    <variation>EA</variation>
    <location>
        <begin position="292"/>
        <end position="293"/>
    </location>
</feature>
<feature type="sequence conflict" description="In Ref. 1; AAA56749." evidence="5" ref="1">
    <original>H</original>
    <variation>R</variation>
    <location>
        <position position="300"/>
    </location>
</feature>
<feature type="sequence conflict" description="In Ref. 1; AAA56749." evidence="5" ref="1">
    <original>A</original>
    <variation>G</variation>
    <location>
        <position position="384"/>
    </location>
</feature>
<feature type="sequence conflict" description="In Ref. 1; AAA56749." evidence="5" ref="1">
    <original>A</original>
    <variation>S</variation>
    <location>
        <position position="387"/>
    </location>
</feature>
<feature type="sequence conflict" description="In Ref. 1; AAA56749." evidence="5" ref="1">
    <original>G</original>
    <variation>E</variation>
    <location>
        <position position="413"/>
    </location>
</feature>
<feature type="sequence conflict" description="In Ref. 1; AAA56749." evidence="5" ref="1">
    <original>D</original>
    <variation>V</variation>
    <location>
        <position position="420"/>
    </location>
</feature>
<feature type="sequence conflict" description="In Ref. 1; AAA56749." evidence="5" ref="1">
    <original>T</original>
    <variation>A</variation>
    <location>
        <position position="583"/>
    </location>
</feature>
<feature type="sequence conflict" description="In Ref. 1; AAA56749." evidence="5" ref="1">
    <original>M</original>
    <variation>L</variation>
    <location>
        <position position="609"/>
    </location>
</feature>
<feature type="sequence conflict" description="In Ref. 1; AAA56749." evidence="5" ref="1">
    <original>E</original>
    <variation>K</variation>
    <location>
        <position position="639"/>
    </location>
</feature>
<feature type="sequence conflict" description="In Ref. 1; AAA56749." evidence="5" ref="1">
    <original>D</original>
    <variation>G</variation>
    <location>
        <position position="666"/>
    </location>
</feature>
<feature type="sequence conflict" description="In Ref. 1; AAA56749." evidence="5" ref="1">
    <original>L</original>
    <variation>I</variation>
    <location>
        <position position="676"/>
    </location>
</feature>
<feature type="sequence conflict" description="In Ref. 1; AAA56749." evidence="5" ref="1">
    <original>FW</original>
    <variation>LG</variation>
    <location>
        <begin position="688"/>
        <end position="689"/>
    </location>
</feature>
<feature type="sequence conflict" description="In Ref. 1; AAA56749." evidence="5" ref="1">
    <original>Q</original>
    <variation>L</variation>
    <location>
        <position position="882"/>
    </location>
</feature>
<feature type="sequence conflict" description="In Ref. 1; AAA56749." evidence="5" ref="1">
    <original>M</original>
    <variation>L</variation>
    <location>
        <position position="894"/>
    </location>
</feature>
<feature type="strand" evidence="7">
    <location>
        <begin position="185"/>
        <end position="188"/>
    </location>
</feature>
<feature type="strand" evidence="9">
    <location>
        <begin position="196"/>
        <end position="199"/>
    </location>
</feature>
<feature type="strand" evidence="7">
    <location>
        <begin position="200"/>
        <end position="206"/>
    </location>
</feature>
<feature type="helix" evidence="7">
    <location>
        <begin position="207"/>
        <end position="209"/>
    </location>
</feature>
<feature type="strand" evidence="7">
    <location>
        <begin position="210"/>
        <end position="213"/>
    </location>
</feature>
<feature type="strand" evidence="7">
    <location>
        <begin position="216"/>
        <end position="219"/>
    </location>
</feature>
<feature type="strand" evidence="7">
    <location>
        <begin position="223"/>
        <end position="230"/>
    </location>
</feature>
<feature type="strand" evidence="7">
    <location>
        <begin position="236"/>
        <end position="245"/>
    </location>
</feature>
<feature type="helix" evidence="7">
    <location>
        <begin position="251"/>
        <end position="263"/>
    </location>
</feature>
<feature type="helix" evidence="7">
    <location>
        <begin position="266"/>
        <end position="268"/>
    </location>
</feature>
<feature type="helix" evidence="7">
    <location>
        <begin position="274"/>
        <end position="293"/>
    </location>
</feature>
<feature type="helix" evidence="7">
    <location>
        <begin position="305"/>
        <end position="307"/>
    </location>
</feature>
<feature type="helix" evidence="7">
    <location>
        <begin position="313"/>
        <end position="330"/>
    </location>
</feature>
<feature type="turn" evidence="7">
    <location>
        <begin position="336"/>
        <end position="339"/>
    </location>
</feature>
<feature type="helix" evidence="7">
    <location>
        <begin position="341"/>
        <end position="357"/>
    </location>
</feature>
<feature type="strand" evidence="9">
    <location>
        <begin position="367"/>
        <end position="369"/>
    </location>
</feature>
<feature type="helix" evidence="7">
    <location>
        <begin position="371"/>
        <end position="375"/>
    </location>
</feature>
<feature type="helix" evidence="7">
    <location>
        <begin position="377"/>
        <end position="388"/>
    </location>
</feature>
<feature type="helix" evidence="7">
    <location>
        <begin position="390"/>
        <end position="392"/>
    </location>
</feature>
<feature type="helix" evidence="7">
    <location>
        <begin position="395"/>
        <end position="408"/>
    </location>
</feature>
<feature type="strand" evidence="7">
    <location>
        <begin position="414"/>
        <end position="416"/>
    </location>
</feature>
<feature type="turn" evidence="8">
    <location>
        <begin position="417"/>
        <end position="420"/>
    </location>
</feature>
<feature type="helix" evidence="7">
    <location>
        <begin position="427"/>
        <end position="443"/>
    </location>
</feature>
<feature type="helix" evidence="7">
    <location>
        <begin position="447"/>
        <end position="457"/>
    </location>
</feature>
<feature type="helix" evidence="7">
    <location>
        <begin position="458"/>
        <end position="460"/>
    </location>
</feature>
<feature type="strand" evidence="7">
    <location>
        <begin position="464"/>
        <end position="471"/>
    </location>
</feature>
<feature type="strand" evidence="7">
    <location>
        <begin position="476"/>
        <end position="478"/>
    </location>
</feature>
<feature type="turn" evidence="7">
    <location>
        <begin position="479"/>
        <end position="481"/>
    </location>
</feature>
<feature type="turn" evidence="7">
    <location>
        <begin position="485"/>
        <end position="487"/>
    </location>
</feature>
<feature type="helix" evidence="7">
    <location>
        <begin position="488"/>
        <end position="503"/>
    </location>
</feature>
<feature type="helix" evidence="7">
    <location>
        <begin position="512"/>
        <end position="524"/>
    </location>
</feature>
<feature type="helix" evidence="7">
    <location>
        <begin position="527"/>
        <end position="529"/>
    </location>
</feature>
<feature type="helix" evidence="7">
    <location>
        <begin position="537"/>
        <end position="539"/>
    </location>
</feature>
<feature type="helix" evidence="7">
    <location>
        <begin position="541"/>
        <end position="545"/>
    </location>
</feature>
<feature type="helix" evidence="7">
    <location>
        <begin position="551"/>
        <end position="566"/>
    </location>
</feature>
<feature type="helix" evidence="7">
    <location>
        <begin position="572"/>
        <end position="587"/>
    </location>
</feature>
<feature type="strand" evidence="9">
    <location>
        <begin position="589"/>
        <end position="591"/>
    </location>
</feature>
<feature type="helix" evidence="7">
    <location>
        <begin position="593"/>
        <end position="596"/>
    </location>
</feature>
<feature type="helix" evidence="7">
    <location>
        <begin position="600"/>
        <end position="611"/>
    </location>
</feature>
<feature type="strand" evidence="7">
    <location>
        <begin position="623"/>
        <end position="627"/>
    </location>
</feature>
<feature type="helix" evidence="7">
    <location>
        <begin position="628"/>
        <end position="630"/>
    </location>
</feature>
<feature type="strand" evidence="7">
    <location>
        <begin position="632"/>
        <end position="637"/>
    </location>
</feature>
<feature type="turn" evidence="7">
    <location>
        <begin position="638"/>
        <end position="641"/>
    </location>
</feature>
<feature type="strand" evidence="7">
    <location>
        <begin position="642"/>
        <end position="647"/>
    </location>
</feature>
<feature type="strand" evidence="7">
    <location>
        <begin position="653"/>
        <end position="655"/>
    </location>
</feature>
<feature type="strand" evidence="9">
    <location>
        <begin position="660"/>
        <end position="662"/>
    </location>
</feature>
<feature type="turn" evidence="7">
    <location>
        <begin position="667"/>
        <end position="670"/>
    </location>
</feature>
<feature type="strand" evidence="7">
    <location>
        <begin position="671"/>
        <end position="677"/>
    </location>
</feature>
<feature type="turn" evidence="7">
    <location>
        <begin position="681"/>
        <end position="684"/>
    </location>
</feature>
<feature type="strand" evidence="7">
    <location>
        <begin position="685"/>
        <end position="687"/>
    </location>
</feature>
<feature type="helix" evidence="7">
    <location>
        <begin position="688"/>
        <end position="691"/>
    </location>
</feature>
<feature type="strand" evidence="8">
    <location>
        <begin position="694"/>
        <end position="696"/>
    </location>
</feature>
<feature type="strand" evidence="7">
    <location>
        <begin position="701"/>
        <end position="703"/>
    </location>
</feature>
<feature type="helix" evidence="7">
    <location>
        <begin position="712"/>
        <end position="716"/>
    </location>
</feature>
<feature type="turn" evidence="7">
    <location>
        <begin position="717"/>
        <end position="720"/>
    </location>
</feature>
<feature type="helix" evidence="7">
    <location>
        <begin position="722"/>
        <end position="726"/>
    </location>
</feature>
<feature type="strand" evidence="7">
    <location>
        <begin position="736"/>
        <end position="753"/>
    </location>
</feature>
<feature type="strand" evidence="7">
    <location>
        <begin position="757"/>
        <end position="768"/>
    </location>
</feature>
<feature type="strand" evidence="7">
    <location>
        <begin position="771"/>
        <end position="781"/>
    </location>
</feature>
<feature type="strand" evidence="8">
    <location>
        <begin position="782"/>
        <end position="784"/>
    </location>
</feature>
<feature type="strand" evidence="7">
    <location>
        <begin position="788"/>
        <end position="796"/>
    </location>
</feature>
<feature type="strand" evidence="8">
    <location>
        <begin position="799"/>
        <end position="801"/>
    </location>
</feature>
<feature type="strand" evidence="7">
    <location>
        <begin position="804"/>
        <end position="807"/>
    </location>
</feature>
<feature type="strand" evidence="7">
    <location>
        <begin position="816"/>
        <end position="831"/>
    </location>
</feature>
<feature type="strand" evidence="7">
    <location>
        <begin position="839"/>
        <end position="858"/>
    </location>
</feature>
<feature type="helix" evidence="7">
    <location>
        <begin position="860"/>
        <end position="863"/>
    </location>
</feature>
<feature type="strand" evidence="7">
    <location>
        <begin position="873"/>
        <end position="883"/>
    </location>
</feature>
<feature type="strand" evidence="7">
    <location>
        <begin position="886"/>
        <end position="888"/>
    </location>
</feature>
<feature type="strand" evidence="7">
    <location>
        <begin position="891"/>
        <end position="898"/>
    </location>
</feature>
<feature type="helix" evidence="7">
    <location>
        <begin position="901"/>
        <end position="909"/>
    </location>
</feature>
<feature type="strand" evidence="7">
    <location>
        <begin position="912"/>
        <end position="918"/>
    </location>
</feature>
<feature type="strand" evidence="7">
    <location>
        <begin position="920"/>
        <end position="927"/>
    </location>
</feature>
<feature type="turn" evidence="7">
    <location>
        <begin position="928"/>
        <end position="931"/>
    </location>
</feature>
<feature type="strand" evidence="7">
    <location>
        <begin position="932"/>
        <end position="937"/>
    </location>
</feature>
<feature type="strand" evidence="7">
    <location>
        <begin position="943"/>
        <end position="945"/>
    </location>
</feature>
<feature type="turn" evidence="7">
    <location>
        <begin position="946"/>
        <end position="948"/>
    </location>
</feature>
<feature type="strand" evidence="7">
    <location>
        <begin position="949"/>
        <end position="951"/>
    </location>
</feature>
<feature type="strand" evidence="7">
    <location>
        <begin position="955"/>
        <end position="962"/>
    </location>
</feature>
<feature type="strand" evidence="7">
    <location>
        <begin position="965"/>
        <end position="972"/>
    </location>
</feature>
<feature type="turn" evidence="7">
    <location>
        <begin position="973"/>
        <end position="976"/>
    </location>
</feature>
<feature type="strand" evidence="7">
    <location>
        <begin position="977"/>
        <end position="981"/>
    </location>
</feature>
<proteinExistence type="evidence at protein level"/>
<sequence>MKQVVDNQTQNKELVKNGDFNQTNPVSGSWSHTSAREWSAWIDKENTADKSPIIQRTEQGQVSLSSDKGFRGAVTQKVNIDPTKKYEVKFDIETSNKAGQAFLRIMEKKDNNTRLWLSEMTSGTTNKHTLTKIYNPKLNVSEVTLELYYEKGTGSATFDNISMKAKGPKDSEHPQPVTTQIEESVNTALNKNYVFNKADYQYTLTNPSLGKIVGGILYPNATGSTTVKISDKSGKIIKEVPLSVTASTEDKFTKLLDKWNDVTIGNHVYDTNDSNMQKINQKLDETNAKNIKTIKLDSNHTFLWKDLDNLNNSAQLTATYRRLEDLAKQITNPHSTIYKNEKAIRTVKESLAWLHQNFYNVNKDIEGSANWWDFEIGVPRSITATLALMNNYFTDAEIKTYTDPIEHFVPDAGYFRKTLDNPFKALGGNLVDMGRVKIIEGLLRKDNTIIEKTSHSLKNLFTTATKAEGFYADGSYIDHTNVAYTGAYGNVLIDGLTQLLPIIQETDYKISNQELDMVYKWINQSFLPLIVKGELMDMSRGRSISREAASSHAAAVEVLRGFLRLANMSNEERNLDLKSTIKTIITSNKFYNVFNNLKSYSDIANMNKMLNDSTVATKPLKSNLSTFNSMDRLAYYNAEKDFGFALSLHSKRTLNYEGMNDENTRDWYTGDGMFYLYNSDQSHYSNHFWPTVNPYKMAGTTEKDAKREDTTKEFMSKHSKDAKEKTGQVTGTSDFVGSVKLNDHFALAAMDFTNWDRTLTAQKGWVILNDKIVFLGSNIKNTNGIGNVSTTIDQRKDDSKTPYTTYVNGKTIDLKQASSQQFTDTKSVFLESKEPGRNIGYIFFKNSTIDIERKEQTGTWNSINRTSKNTSIVSNPFITISQKHDNKGDSYGYMMVPNIDRTSFDKLANSKEVELLENSSKQQVIYDKNSQTWAVIKHDNQESLINNQFKMNKAGLYLVQKVGNDYQNVYYQPQTMTKTDQLAI</sequence>
<reference key="1">
    <citation type="journal article" date="1994" name="J. Biol. Chem.">
        <title>Cloning and expression of the gene for group B streptococcal hyaluronate lyase.</title>
        <authorList>
            <person name="Lin B."/>
            <person name="Hollingshead S.K."/>
            <person name="Coligan J.E."/>
            <person name="Egan M.L."/>
            <person name="Baker J.R."/>
            <person name="Pritchard D.G."/>
        </authorList>
    </citation>
    <scope>NUCLEOTIDE SEQUENCE [GENOMIC DNA]</scope>
    <scope>CATALYTIC ACTIVITY</scope>
    <source>
        <strain>3502 / Serotype III</strain>
    </source>
</reference>
<reference key="2">
    <citation type="journal article" date="2002" name="Mol. Microbiol.">
        <title>Genome sequence of Streptococcus agalactiae, a pathogen causing invasive neonatal disease.</title>
        <authorList>
            <person name="Glaser P."/>
            <person name="Rusniok C."/>
            <person name="Buchrieser C."/>
            <person name="Chevalier F."/>
            <person name="Frangeul L."/>
            <person name="Msadek T."/>
            <person name="Zouine M."/>
            <person name="Couve E."/>
            <person name="Lalioui L."/>
            <person name="Poyart C."/>
            <person name="Trieu-Cuot P."/>
            <person name="Kunst F."/>
        </authorList>
    </citation>
    <scope>NUCLEOTIDE SEQUENCE [LARGE SCALE GENOMIC DNA]</scope>
    <source>
        <strain>NEM316</strain>
    </source>
</reference>
<reference key="3">
    <citation type="journal article" date="2001" name="J. Biol. Chem.">
        <title>Hyaluronan binding and degradation by Streptococcus agalactiae hyaluronate lyase.</title>
        <authorList>
            <person name="Li S."/>
            <person name="Jedrzejas M.J."/>
        </authorList>
    </citation>
    <scope>X-RAY CRYSTALLOGRAPHY (2.1 ANGSTROMS) OF 171-984</scope>
    <scope>ACTIVE SITE</scope>
</reference>
<dbReference type="EC" id="4.2.2.1" evidence="3"/>
<dbReference type="EMBL" id="U15050">
    <property type="protein sequence ID" value="AAA56749.1"/>
    <property type="molecule type" value="Genomic_DNA"/>
</dbReference>
<dbReference type="EMBL" id="AL766849">
    <property type="protein sequence ID" value="CAD46929.1"/>
    <property type="status" value="ALT_INIT"/>
    <property type="molecule type" value="Genomic_DNA"/>
</dbReference>
<dbReference type="PIR" id="A55137">
    <property type="entry name" value="A55137"/>
</dbReference>
<dbReference type="RefSeq" id="WP_000403400.1">
    <property type="nucleotide sequence ID" value="NC_004368.1"/>
</dbReference>
<dbReference type="PDB" id="1F1S">
    <property type="method" value="X-ray"/>
    <property type="resolution" value="2.10 A"/>
    <property type="chains" value="A=171-984"/>
</dbReference>
<dbReference type="PDB" id="1I8Q">
    <property type="method" value="X-ray"/>
    <property type="resolution" value="2.20 A"/>
    <property type="chains" value="A=171-984"/>
</dbReference>
<dbReference type="PDB" id="1LXM">
    <property type="method" value="X-ray"/>
    <property type="resolution" value="2.20 A"/>
    <property type="chains" value="A=171-984"/>
</dbReference>
<dbReference type="PDBsum" id="1F1S"/>
<dbReference type="PDBsum" id="1I8Q"/>
<dbReference type="PDBsum" id="1LXM"/>
<dbReference type="SMR" id="Q53591"/>
<dbReference type="DrugBank" id="DB04548">
    <property type="generic name" value="4-Deoxy-D-Glucuronic Acid"/>
</dbReference>
<dbReference type="CAZy" id="CBM70">
    <property type="family name" value="Carbohydrate-Binding Module Family 70"/>
</dbReference>
<dbReference type="CAZy" id="PL8">
    <property type="family name" value="Polysaccharide Lyase Family 8"/>
</dbReference>
<dbReference type="KEGG" id="san:gbs1270"/>
<dbReference type="eggNOG" id="COG5492">
    <property type="taxonomic scope" value="Bacteria"/>
</dbReference>
<dbReference type="HOGENOM" id="CLU_004172_0_0_9"/>
<dbReference type="BRENDA" id="4.2.2.1">
    <property type="organism ID" value="5917"/>
</dbReference>
<dbReference type="EvolutionaryTrace" id="Q53591"/>
<dbReference type="PHI-base" id="PHI:3461"/>
<dbReference type="Proteomes" id="UP000000823">
    <property type="component" value="Chromosome"/>
</dbReference>
<dbReference type="GO" id="GO:0005576">
    <property type="term" value="C:extracellular region"/>
    <property type="evidence" value="ECO:0007669"/>
    <property type="project" value="UniProtKB-SubCell"/>
</dbReference>
<dbReference type="GO" id="GO:0030246">
    <property type="term" value="F:carbohydrate binding"/>
    <property type="evidence" value="ECO:0007669"/>
    <property type="project" value="InterPro"/>
</dbReference>
<dbReference type="GO" id="GO:0030340">
    <property type="term" value="F:hyaluronate lyase activity"/>
    <property type="evidence" value="ECO:0007669"/>
    <property type="project" value="UniProtKB-EC"/>
</dbReference>
<dbReference type="GO" id="GO:0005975">
    <property type="term" value="P:carbohydrate metabolic process"/>
    <property type="evidence" value="ECO:0007669"/>
    <property type="project" value="InterPro"/>
</dbReference>
<dbReference type="CDD" id="cd01083">
    <property type="entry name" value="GAG_Lyase"/>
    <property type="match status" value="1"/>
</dbReference>
<dbReference type="Gene3D" id="2.70.98.10">
    <property type="match status" value="1"/>
</dbReference>
<dbReference type="Gene3D" id="1.50.10.100">
    <property type="entry name" value="Chondroitin AC/alginate lyase"/>
    <property type="match status" value="1"/>
</dbReference>
<dbReference type="Gene3D" id="2.60.40.1380">
    <property type="entry name" value="E set domains, domain 4"/>
    <property type="match status" value="1"/>
</dbReference>
<dbReference type="Gene3D" id="2.60.120.260">
    <property type="entry name" value="Galactose-binding domain-like"/>
    <property type="match status" value="1"/>
</dbReference>
<dbReference type="Gene3D" id="2.60.220.10">
    <property type="entry name" value="Polysaccharide lyase family 8-like, C-terminal"/>
    <property type="match status" value="1"/>
</dbReference>
<dbReference type="InterPro" id="IPR008929">
    <property type="entry name" value="Chondroitin_lyas"/>
</dbReference>
<dbReference type="InterPro" id="IPR011013">
    <property type="entry name" value="Gal_mutarotase_sf_dom"/>
</dbReference>
<dbReference type="InterPro" id="IPR008979">
    <property type="entry name" value="Galactose-bd-like_sf"/>
</dbReference>
<dbReference type="InterPro" id="IPR014718">
    <property type="entry name" value="GH-type_carb-bd"/>
</dbReference>
<dbReference type="InterPro" id="IPR048734">
    <property type="entry name" value="HL_N-beta"/>
</dbReference>
<dbReference type="InterPro" id="IPR023295">
    <property type="entry name" value="Hyaluronate_lyase_beta_dom_sf"/>
</dbReference>
<dbReference type="InterPro" id="IPR054563">
    <property type="entry name" value="HylB-like_N"/>
</dbReference>
<dbReference type="InterPro" id="IPR014756">
    <property type="entry name" value="Ig_E-set"/>
</dbReference>
<dbReference type="InterPro" id="IPR038970">
    <property type="entry name" value="Lyase_8"/>
</dbReference>
<dbReference type="InterPro" id="IPR011071">
    <property type="entry name" value="Lyase_8-like_C"/>
</dbReference>
<dbReference type="InterPro" id="IPR012970">
    <property type="entry name" value="Lyase_8_alpha_N"/>
</dbReference>
<dbReference type="InterPro" id="IPR004103">
    <property type="entry name" value="Lyase_8_C"/>
</dbReference>
<dbReference type="InterPro" id="IPR003159">
    <property type="entry name" value="Lyase_8_central_dom"/>
</dbReference>
<dbReference type="PANTHER" id="PTHR38481">
    <property type="entry name" value="HYALURONATE LYASE"/>
    <property type="match status" value="1"/>
</dbReference>
<dbReference type="PANTHER" id="PTHR38481:SF1">
    <property type="entry name" value="HYALURONATE LYASE"/>
    <property type="match status" value="1"/>
</dbReference>
<dbReference type="Pfam" id="PF22637">
    <property type="entry name" value="CBM_4_9_1"/>
    <property type="match status" value="1"/>
</dbReference>
<dbReference type="Pfam" id="PF21461">
    <property type="entry name" value="HL_N-beta"/>
    <property type="match status" value="1"/>
</dbReference>
<dbReference type="Pfam" id="PF02278">
    <property type="entry name" value="Lyase_8"/>
    <property type="match status" value="1"/>
</dbReference>
<dbReference type="Pfam" id="PF02884">
    <property type="entry name" value="Lyase_8_C"/>
    <property type="match status" value="1"/>
</dbReference>
<dbReference type="Pfam" id="PF08124">
    <property type="entry name" value="Lyase_8_N"/>
    <property type="match status" value="1"/>
</dbReference>
<dbReference type="SUPFAM" id="SSF48230">
    <property type="entry name" value="Chondroitin AC/alginate lyase"/>
    <property type="match status" value="1"/>
</dbReference>
<dbReference type="SUPFAM" id="SSF81296">
    <property type="entry name" value="E set domains"/>
    <property type="match status" value="1"/>
</dbReference>
<dbReference type="SUPFAM" id="SSF74650">
    <property type="entry name" value="Galactose mutarotase-like"/>
    <property type="match status" value="1"/>
</dbReference>
<dbReference type="SUPFAM" id="SSF49785">
    <property type="entry name" value="Galactose-binding domain-like"/>
    <property type="match status" value="1"/>
</dbReference>
<dbReference type="SUPFAM" id="SSF49863">
    <property type="entry name" value="Hyaluronate lyase-like, C-terminal domain"/>
    <property type="match status" value="1"/>
</dbReference>
<gene>
    <name evidence="4" type="primary">hylB</name>
    <name type="ordered locus">gbs1270</name>
</gene>